<evidence type="ECO:0000255" key="1">
    <source>
        <dbReference type="HAMAP-Rule" id="MF_03035"/>
    </source>
</evidence>
<evidence type="ECO:0000269" key="2">
    <source>
    </source>
</evidence>
<evidence type="ECO:0000269" key="3">
    <source>
    </source>
</evidence>
<evidence type="ECO:0000305" key="4"/>
<protein>
    <recommendedName>
        <fullName evidence="1">Polyribonucleotide 5'-hydroxyl-kinase Clp1</fullName>
        <ecNumber evidence="1">2.7.1.78</ecNumber>
    </recommendedName>
    <alternativeName>
        <fullName evidence="1">Polyadenylation factor Clp1</fullName>
    </alternativeName>
    <alternativeName>
        <fullName evidence="1">Polynucleotide kinase Clp1</fullName>
    </alternativeName>
    <alternativeName>
        <fullName evidence="1">Pre-mRNA cleavage complex II protein Clp1</fullName>
    </alternativeName>
</protein>
<name>CLP1_MOUSE</name>
<sequence length="425" mass="47738">MSEESNDDKKPTTKFELERETELRFEVEASQSVQLELLAGMAEIFGTELTRNKKFTFDAGAKVAVFTWHGCSLQLSGRTEVAYVSKDTPMLLYLNTHTALEQMRRQAEKEEERGPRVMVVGPTDVGKSTVCRLLLNYAVRLGRRPTYVELDVGQGSVSIPGTMGALYIERPADVEEGFSIQAPLVYHFGSTTPGTNIKLYNKITSRLADVFNQRCEVNRRASVSGCVINTCGWVKGYGYQALVHAASAFEVDVVVVLDQERLYNELKRDLPHFVRTVLLPKSGGVVERSKDFRRECRDERIREYFYGFRGCFYPHAFNVKFSDVKIYKVGAPTIPDSCLPLGMSQEDNQLKLVPVTPGRDMVHHLLSVSTAEGTEENLSETSVAGFIVVTSVDVEHQVFTVLSPAPRPLPKNFLLIMDIRFMDLK</sequence>
<dbReference type="EC" id="2.7.1.78" evidence="1"/>
<dbReference type="EMBL" id="AK077647">
    <property type="protein sequence ID" value="BAC36924.1"/>
    <property type="molecule type" value="mRNA"/>
</dbReference>
<dbReference type="EMBL" id="AK145209">
    <property type="protein sequence ID" value="BAE26299.1"/>
    <property type="molecule type" value="mRNA"/>
</dbReference>
<dbReference type="EMBL" id="AK169709">
    <property type="protein sequence ID" value="BAE41321.1"/>
    <property type="molecule type" value="mRNA"/>
</dbReference>
<dbReference type="EMBL" id="BC003237">
    <property type="protein sequence ID" value="AAH03237.1"/>
    <property type="molecule type" value="mRNA"/>
</dbReference>
<dbReference type="CCDS" id="CCDS16191.1"/>
<dbReference type="RefSeq" id="NP_598601.1">
    <property type="nucleotide sequence ID" value="NM_133840.3"/>
</dbReference>
<dbReference type="SMR" id="Q99LI9"/>
<dbReference type="BioGRID" id="221164">
    <property type="interactions" value="9"/>
</dbReference>
<dbReference type="FunCoup" id="Q99LI9">
    <property type="interactions" value="3581"/>
</dbReference>
<dbReference type="IntAct" id="Q99LI9">
    <property type="interactions" value="9"/>
</dbReference>
<dbReference type="STRING" id="10090.ENSMUSP00000129300"/>
<dbReference type="GlyGen" id="Q99LI9">
    <property type="glycosylation" value="2 sites"/>
</dbReference>
<dbReference type="iPTMnet" id="Q99LI9"/>
<dbReference type="PhosphoSitePlus" id="Q99LI9"/>
<dbReference type="SwissPalm" id="Q99LI9"/>
<dbReference type="PaxDb" id="10090-ENSMUSP00000028475"/>
<dbReference type="PeptideAtlas" id="Q99LI9"/>
<dbReference type="ProteomicsDB" id="283860"/>
<dbReference type="Pumba" id="Q99LI9"/>
<dbReference type="Antibodypedia" id="27467">
    <property type="antibodies" value="205 antibodies from 28 providers"/>
</dbReference>
<dbReference type="DNASU" id="98985"/>
<dbReference type="Ensembl" id="ENSMUST00000028475.9">
    <property type="protein sequence ID" value="ENSMUSP00000028475.9"/>
    <property type="gene ID" value="ENSMUSG00000027079.16"/>
</dbReference>
<dbReference type="Ensembl" id="ENSMUST00000165219.9">
    <property type="protein sequence ID" value="ENSMUSP00000129300.2"/>
    <property type="gene ID" value="ENSMUSG00000027079.16"/>
</dbReference>
<dbReference type="GeneID" id="98985"/>
<dbReference type="KEGG" id="mmu:98985"/>
<dbReference type="UCSC" id="uc008kja.1">
    <property type="organism name" value="mouse"/>
</dbReference>
<dbReference type="AGR" id="MGI:2138968"/>
<dbReference type="CTD" id="10978"/>
<dbReference type="MGI" id="MGI:2138968">
    <property type="gene designation" value="Clp1"/>
</dbReference>
<dbReference type="VEuPathDB" id="HostDB:ENSMUSG00000027079"/>
<dbReference type="eggNOG" id="KOG2749">
    <property type="taxonomic scope" value="Eukaryota"/>
</dbReference>
<dbReference type="GeneTree" id="ENSGT00940000153668"/>
<dbReference type="HOGENOM" id="CLU_018195_1_0_1"/>
<dbReference type="InParanoid" id="Q99LI9"/>
<dbReference type="OMA" id="VQYVNCH"/>
<dbReference type="OrthoDB" id="258143at2759"/>
<dbReference type="PhylomeDB" id="Q99LI9"/>
<dbReference type="TreeFam" id="TF105795"/>
<dbReference type="Reactome" id="R-MMU-72187">
    <property type="pathway name" value="mRNA 3'-end processing"/>
</dbReference>
<dbReference type="Reactome" id="R-MMU-72203">
    <property type="pathway name" value="Processing of Capped Intron-Containing Pre-mRNA"/>
</dbReference>
<dbReference type="Reactome" id="R-MMU-73856">
    <property type="pathway name" value="RNA Polymerase II Transcription Termination"/>
</dbReference>
<dbReference type="Reactome" id="R-MMU-77595">
    <property type="pathway name" value="Processing of Intronless Pre-mRNAs"/>
</dbReference>
<dbReference type="BioGRID-ORCS" id="98985">
    <property type="hits" value="31 hits in 77 CRISPR screens"/>
</dbReference>
<dbReference type="PRO" id="PR:Q99LI9"/>
<dbReference type="Proteomes" id="UP000000589">
    <property type="component" value="Chromosome 2"/>
</dbReference>
<dbReference type="RNAct" id="Q99LI9">
    <property type="molecule type" value="protein"/>
</dbReference>
<dbReference type="Bgee" id="ENSMUSG00000027079">
    <property type="expression patterns" value="Expressed in fetal liver hematopoietic progenitor cell and 261 other cell types or tissues"/>
</dbReference>
<dbReference type="GO" id="GO:0005829">
    <property type="term" value="C:cytosol"/>
    <property type="evidence" value="ECO:0007669"/>
    <property type="project" value="Ensembl"/>
</dbReference>
<dbReference type="GO" id="GO:0005849">
    <property type="term" value="C:mRNA cleavage factor complex"/>
    <property type="evidence" value="ECO:0007669"/>
    <property type="project" value="UniProtKB-UniRule"/>
</dbReference>
<dbReference type="GO" id="GO:0005654">
    <property type="term" value="C:nucleoplasm"/>
    <property type="evidence" value="ECO:0007669"/>
    <property type="project" value="Ensembl"/>
</dbReference>
<dbReference type="GO" id="GO:0000214">
    <property type="term" value="C:tRNA-intron endonuclease complex"/>
    <property type="evidence" value="ECO:0000250"/>
    <property type="project" value="UniProtKB"/>
</dbReference>
<dbReference type="GO" id="GO:0005524">
    <property type="term" value="F:ATP binding"/>
    <property type="evidence" value="ECO:0007669"/>
    <property type="project" value="UniProtKB-UniRule"/>
</dbReference>
<dbReference type="GO" id="GO:0046404">
    <property type="term" value="F:ATP-dependent polydeoxyribonucleotide 5'-hydroxyl-kinase activity"/>
    <property type="evidence" value="ECO:0007669"/>
    <property type="project" value="UniProtKB-UniRule"/>
</dbReference>
<dbReference type="GO" id="GO:0051736">
    <property type="term" value="F:ATP-dependent polyribonucleotide 5'-hydroxyl-kinase activity"/>
    <property type="evidence" value="ECO:0007669"/>
    <property type="project" value="UniProtKB-UniRule"/>
</dbReference>
<dbReference type="GO" id="GO:0021695">
    <property type="term" value="P:cerebellar cortex development"/>
    <property type="evidence" value="ECO:0000315"/>
    <property type="project" value="UniProtKB"/>
</dbReference>
<dbReference type="GO" id="GO:0098795">
    <property type="term" value="P:global gene silencing by mRNA cleavage"/>
    <property type="evidence" value="ECO:0000250"/>
    <property type="project" value="UniProtKB"/>
</dbReference>
<dbReference type="GO" id="GO:0031124">
    <property type="term" value="P:mRNA 3'-end processing"/>
    <property type="evidence" value="ECO:0007669"/>
    <property type="project" value="UniProtKB-UniRule"/>
</dbReference>
<dbReference type="GO" id="GO:0070922">
    <property type="term" value="P:RISC complex assembly"/>
    <property type="evidence" value="ECO:0000250"/>
    <property type="project" value="UniProtKB"/>
</dbReference>
<dbReference type="GO" id="GO:0006388">
    <property type="term" value="P:tRNA splicing, via endonucleolytic cleavage and ligation"/>
    <property type="evidence" value="ECO:0000250"/>
    <property type="project" value="UniProtKB"/>
</dbReference>
<dbReference type="CDD" id="cd01983">
    <property type="entry name" value="SIMIBI"/>
    <property type="match status" value="1"/>
</dbReference>
<dbReference type="FunFam" id="2.40.30.330:FF:000001">
    <property type="entry name" value="Protein CLP1 homolog"/>
    <property type="match status" value="1"/>
</dbReference>
<dbReference type="FunFam" id="3.40.50.300:FF:000454">
    <property type="entry name" value="Protein CLP1 homolog"/>
    <property type="match status" value="1"/>
</dbReference>
<dbReference type="FunFam" id="2.60.120.1030:FF:000001">
    <property type="entry name" value="Protein CLP1 homolog 5"/>
    <property type="match status" value="1"/>
</dbReference>
<dbReference type="Gene3D" id="2.60.120.1030">
    <property type="entry name" value="Clp1, DNA binding domain"/>
    <property type="match status" value="1"/>
</dbReference>
<dbReference type="Gene3D" id="3.40.50.300">
    <property type="entry name" value="P-loop containing nucleotide triphosphate hydrolases"/>
    <property type="match status" value="1"/>
</dbReference>
<dbReference type="Gene3D" id="2.40.30.330">
    <property type="entry name" value="Pre-mRNA cleavage complex subunit Clp1, C-terminal domain"/>
    <property type="match status" value="1"/>
</dbReference>
<dbReference type="HAMAP" id="MF_03035">
    <property type="entry name" value="Clp1"/>
    <property type="match status" value="1"/>
</dbReference>
<dbReference type="InterPro" id="IPR028606">
    <property type="entry name" value="Clp1"/>
</dbReference>
<dbReference type="InterPro" id="IPR045116">
    <property type="entry name" value="Clp1/Grc3"/>
</dbReference>
<dbReference type="InterPro" id="IPR010655">
    <property type="entry name" value="Clp1_C"/>
</dbReference>
<dbReference type="InterPro" id="IPR038238">
    <property type="entry name" value="Clp1_C_sf"/>
</dbReference>
<dbReference type="InterPro" id="IPR032324">
    <property type="entry name" value="Clp1_N"/>
</dbReference>
<dbReference type="InterPro" id="IPR038239">
    <property type="entry name" value="Clp1_N_sf"/>
</dbReference>
<dbReference type="InterPro" id="IPR032319">
    <property type="entry name" value="CLP1_P"/>
</dbReference>
<dbReference type="InterPro" id="IPR027417">
    <property type="entry name" value="P-loop_NTPase"/>
</dbReference>
<dbReference type="PANTHER" id="PTHR12755">
    <property type="entry name" value="CLEAVAGE/POLYADENYLATION FACTOR IA SUBUNIT CLP1P"/>
    <property type="match status" value="1"/>
</dbReference>
<dbReference type="PANTHER" id="PTHR12755:SF6">
    <property type="entry name" value="POLYRIBONUCLEOTIDE 5'-HYDROXYL-KINASE CLP1"/>
    <property type="match status" value="1"/>
</dbReference>
<dbReference type="Pfam" id="PF06807">
    <property type="entry name" value="Clp1"/>
    <property type="match status" value="1"/>
</dbReference>
<dbReference type="Pfam" id="PF16573">
    <property type="entry name" value="CLP1_N"/>
    <property type="match status" value="1"/>
</dbReference>
<dbReference type="Pfam" id="PF16575">
    <property type="entry name" value="CLP1_P"/>
    <property type="match status" value="1"/>
</dbReference>
<dbReference type="SUPFAM" id="SSF52540">
    <property type="entry name" value="P-loop containing nucleoside triphosphate hydrolases"/>
    <property type="match status" value="1"/>
</dbReference>
<keyword id="KW-0067">ATP-binding</keyword>
<keyword id="KW-0418">Kinase</keyword>
<keyword id="KW-0460">Magnesium</keyword>
<keyword id="KW-0464">Manganese</keyword>
<keyword id="KW-0507">mRNA processing</keyword>
<keyword id="KW-0523">Neurodegeneration</keyword>
<keyword id="KW-0533">Nickel</keyword>
<keyword id="KW-0547">Nucleotide-binding</keyword>
<keyword id="KW-0539">Nucleus</keyword>
<keyword id="KW-1185">Reference proteome</keyword>
<keyword id="KW-0808">Transferase</keyword>
<keyword id="KW-0819">tRNA processing</keyword>
<accession>Q99LI9</accession>
<accession>Q3TEC7</accession>
<accession>Q3ULZ9</accession>
<feature type="chain" id="PRO_0000089864" description="Polyribonucleotide 5'-hydroxyl-kinase Clp1">
    <location>
        <begin position="1"/>
        <end position="425"/>
    </location>
</feature>
<feature type="binding site" evidence="1">
    <location>
        <position position="22"/>
    </location>
    <ligand>
        <name>ATP</name>
        <dbReference type="ChEBI" id="CHEBI:30616"/>
    </ligand>
</feature>
<feature type="binding site" evidence="1">
    <location>
        <position position="62"/>
    </location>
    <ligand>
        <name>ATP</name>
        <dbReference type="ChEBI" id="CHEBI:30616"/>
    </ligand>
</feature>
<feature type="binding site" evidence="1">
    <location>
        <begin position="124"/>
        <end position="129"/>
    </location>
    <ligand>
        <name>ATP</name>
        <dbReference type="ChEBI" id="CHEBI:30616"/>
    </ligand>
</feature>
<feature type="mutagenesis site" description="Progressive loss of motor neurons, axonal motor neuropathy, and muscle paralysis leading to death within hours of birth. Mice exhibit microcephaly due to reduced numbers of cortical neurons. Embryos have normal numbers and proliferation of neuronal progenitors, but neuronal progenitor cells undergo enhanced cell death, resulting in reduced numbers of cortical neurons." evidence="2 3">
    <original>K</original>
    <variation>A</variation>
    <location>
        <position position="127"/>
    </location>
</feature>
<feature type="sequence conflict" description="In Ref. 1; BAE26299." evidence="4" ref="1">
    <original>T</original>
    <variation>N</variation>
    <location>
        <position position="79"/>
    </location>
</feature>
<feature type="sequence conflict" description="In Ref. 1; BAE41321." evidence="4" ref="1">
    <original>N</original>
    <variation>D</variation>
    <location>
        <position position="264"/>
    </location>
</feature>
<feature type="sequence conflict" description="In Ref. 1; BAE26299." evidence="4" ref="1">
    <original>V</original>
    <variation>L</variation>
    <location>
        <position position="394"/>
    </location>
</feature>
<gene>
    <name type="primary">Clp1</name>
</gene>
<reference key="1">
    <citation type="journal article" date="2005" name="Science">
        <title>The transcriptional landscape of the mammalian genome.</title>
        <authorList>
            <person name="Carninci P."/>
            <person name="Kasukawa T."/>
            <person name="Katayama S."/>
            <person name="Gough J."/>
            <person name="Frith M.C."/>
            <person name="Maeda N."/>
            <person name="Oyama R."/>
            <person name="Ravasi T."/>
            <person name="Lenhard B."/>
            <person name="Wells C."/>
            <person name="Kodzius R."/>
            <person name="Shimokawa K."/>
            <person name="Bajic V.B."/>
            <person name="Brenner S.E."/>
            <person name="Batalov S."/>
            <person name="Forrest A.R."/>
            <person name="Zavolan M."/>
            <person name="Davis M.J."/>
            <person name="Wilming L.G."/>
            <person name="Aidinis V."/>
            <person name="Allen J.E."/>
            <person name="Ambesi-Impiombato A."/>
            <person name="Apweiler R."/>
            <person name="Aturaliya R.N."/>
            <person name="Bailey T.L."/>
            <person name="Bansal M."/>
            <person name="Baxter L."/>
            <person name="Beisel K.W."/>
            <person name="Bersano T."/>
            <person name="Bono H."/>
            <person name="Chalk A.M."/>
            <person name="Chiu K.P."/>
            <person name="Choudhary V."/>
            <person name="Christoffels A."/>
            <person name="Clutterbuck D.R."/>
            <person name="Crowe M.L."/>
            <person name="Dalla E."/>
            <person name="Dalrymple B.P."/>
            <person name="de Bono B."/>
            <person name="Della Gatta G."/>
            <person name="di Bernardo D."/>
            <person name="Down T."/>
            <person name="Engstrom P."/>
            <person name="Fagiolini M."/>
            <person name="Faulkner G."/>
            <person name="Fletcher C.F."/>
            <person name="Fukushima T."/>
            <person name="Furuno M."/>
            <person name="Futaki S."/>
            <person name="Gariboldi M."/>
            <person name="Georgii-Hemming P."/>
            <person name="Gingeras T.R."/>
            <person name="Gojobori T."/>
            <person name="Green R.E."/>
            <person name="Gustincich S."/>
            <person name="Harbers M."/>
            <person name="Hayashi Y."/>
            <person name="Hensch T.K."/>
            <person name="Hirokawa N."/>
            <person name="Hill D."/>
            <person name="Huminiecki L."/>
            <person name="Iacono M."/>
            <person name="Ikeo K."/>
            <person name="Iwama A."/>
            <person name="Ishikawa T."/>
            <person name="Jakt M."/>
            <person name="Kanapin A."/>
            <person name="Katoh M."/>
            <person name="Kawasawa Y."/>
            <person name="Kelso J."/>
            <person name="Kitamura H."/>
            <person name="Kitano H."/>
            <person name="Kollias G."/>
            <person name="Krishnan S.P."/>
            <person name="Kruger A."/>
            <person name="Kummerfeld S.K."/>
            <person name="Kurochkin I.V."/>
            <person name="Lareau L.F."/>
            <person name="Lazarevic D."/>
            <person name="Lipovich L."/>
            <person name="Liu J."/>
            <person name="Liuni S."/>
            <person name="McWilliam S."/>
            <person name="Madan Babu M."/>
            <person name="Madera M."/>
            <person name="Marchionni L."/>
            <person name="Matsuda H."/>
            <person name="Matsuzawa S."/>
            <person name="Miki H."/>
            <person name="Mignone F."/>
            <person name="Miyake S."/>
            <person name="Morris K."/>
            <person name="Mottagui-Tabar S."/>
            <person name="Mulder N."/>
            <person name="Nakano N."/>
            <person name="Nakauchi H."/>
            <person name="Ng P."/>
            <person name="Nilsson R."/>
            <person name="Nishiguchi S."/>
            <person name="Nishikawa S."/>
            <person name="Nori F."/>
            <person name="Ohara O."/>
            <person name="Okazaki Y."/>
            <person name="Orlando V."/>
            <person name="Pang K.C."/>
            <person name="Pavan W.J."/>
            <person name="Pavesi G."/>
            <person name="Pesole G."/>
            <person name="Petrovsky N."/>
            <person name="Piazza S."/>
            <person name="Reed J."/>
            <person name="Reid J.F."/>
            <person name="Ring B.Z."/>
            <person name="Ringwald M."/>
            <person name="Rost B."/>
            <person name="Ruan Y."/>
            <person name="Salzberg S.L."/>
            <person name="Sandelin A."/>
            <person name="Schneider C."/>
            <person name="Schoenbach C."/>
            <person name="Sekiguchi K."/>
            <person name="Semple C.A."/>
            <person name="Seno S."/>
            <person name="Sessa L."/>
            <person name="Sheng Y."/>
            <person name="Shibata Y."/>
            <person name="Shimada H."/>
            <person name="Shimada K."/>
            <person name="Silva D."/>
            <person name="Sinclair B."/>
            <person name="Sperling S."/>
            <person name="Stupka E."/>
            <person name="Sugiura K."/>
            <person name="Sultana R."/>
            <person name="Takenaka Y."/>
            <person name="Taki K."/>
            <person name="Tammoja K."/>
            <person name="Tan S.L."/>
            <person name="Tang S."/>
            <person name="Taylor M.S."/>
            <person name="Tegner J."/>
            <person name="Teichmann S.A."/>
            <person name="Ueda H.R."/>
            <person name="van Nimwegen E."/>
            <person name="Verardo R."/>
            <person name="Wei C.L."/>
            <person name="Yagi K."/>
            <person name="Yamanishi H."/>
            <person name="Zabarovsky E."/>
            <person name="Zhu S."/>
            <person name="Zimmer A."/>
            <person name="Hide W."/>
            <person name="Bult C."/>
            <person name="Grimmond S.M."/>
            <person name="Teasdale R.D."/>
            <person name="Liu E.T."/>
            <person name="Brusic V."/>
            <person name="Quackenbush J."/>
            <person name="Wahlestedt C."/>
            <person name="Mattick J.S."/>
            <person name="Hume D.A."/>
            <person name="Kai C."/>
            <person name="Sasaki D."/>
            <person name="Tomaru Y."/>
            <person name="Fukuda S."/>
            <person name="Kanamori-Katayama M."/>
            <person name="Suzuki M."/>
            <person name="Aoki J."/>
            <person name="Arakawa T."/>
            <person name="Iida J."/>
            <person name="Imamura K."/>
            <person name="Itoh M."/>
            <person name="Kato T."/>
            <person name="Kawaji H."/>
            <person name="Kawagashira N."/>
            <person name="Kawashima T."/>
            <person name="Kojima M."/>
            <person name="Kondo S."/>
            <person name="Konno H."/>
            <person name="Nakano K."/>
            <person name="Ninomiya N."/>
            <person name="Nishio T."/>
            <person name="Okada M."/>
            <person name="Plessy C."/>
            <person name="Shibata K."/>
            <person name="Shiraki T."/>
            <person name="Suzuki S."/>
            <person name="Tagami M."/>
            <person name="Waki K."/>
            <person name="Watahiki A."/>
            <person name="Okamura-Oho Y."/>
            <person name="Suzuki H."/>
            <person name="Kawai J."/>
            <person name="Hayashizaki Y."/>
        </authorList>
    </citation>
    <scope>NUCLEOTIDE SEQUENCE [LARGE SCALE MRNA]</scope>
    <source>
        <strain>C57BL/6J</strain>
        <strain>NOD</strain>
        <tissue>Embryo</tissue>
        <tissue>Mammary gland</tissue>
        <tissue>Thymus</tissue>
    </source>
</reference>
<reference key="2">
    <citation type="journal article" date="2004" name="Genome Res.">
        <title>The status, quality, and expansion of the NIH full-length cDNA project: the Mammalian Gene Collection (MGC).</title>
        <authorList>
            <consortium name="The MGC Project Team"/>
        </authorList>
    </citation>
    <scope>NUCLEOTIDE SEQUENCE [LARGE SCALE MRNA]</scope>
    <source>
        <strain>FVB/N</strain>
        <tissue>Mammary tumor</tissue>
    </source>
</reference>
<reference key="3">
    <citation type="journal article" date="2013" name="Nature">
        <title>CLP1 links tRNA metabolism to progressive motor-neuron loss.</title>
        <authorList>
            <person name="Hanada T."/>
            <person name="Weitzer S."/>
            <person name="Mair B."/>
            <person name="Bernreuther C."/>
            <person name="Wainger B.J."/>
            <person name="Ichida J."/>
            <person name="Hanada R."/>
            <person name="Orthofer M."/>
            <person name="Cronin S.J."/>
            <person name="Komnenovic V."/>
            <person name="Minis A."/>
            <person name="Sato F."/>
            <person name="Mimata H."/>
            <person name="Yoshimura A."/>
            <person name="Tamir I."/>
            <person name="Rainer J."/>
            <person name="Kofler R."/>
            <person name="Yaron A."/>
            <person name="Eggan K.C."/>
            <person name="Woolf C.J."/>
            <person name="Glatzel M."/>
            <person name="Herbst R."/>
            <person name="Martinez J."/>
            <person name="Penninger J.M."/>
        </authorList>
    </citation>
    <scope>FUNCTION</scope>
    <scope>DISRUPTION PHENOTYPE</scope>
    <scope>MUTAGENESIS OF LYS-127</scope>
</reference>
<reference key="4">
    <citation type="journal article" date="2014" name="Cell">
        <title>Human CLP1 mutations alter tRNA biogenesis, affecting both peripheral and central nervous system function.</title>
        <authorList>
            <consortium name="Baylor Hopkins Center for Mendelian Genomics"/>
            <person name="Karaca E."/>
            <person name="Weitzer S."/>
            <person name="Pehlivan D."/>
            <person name="Shiraishi H."/>
            <person name="Gogakos T."/>
            <person name="Hanada T."/>
            <person name="Jhangiani S.N."/>
            <person name="Wiszniewski W."/>
            <person name="Withers M."/>
            <person name="Campbell I.M."/>
            <person name="Erdin S."/>
            <person name="Isikay S."/>
            <person name="Franco L.M."/>
            <person name="Gonzaga-Jauregui C."/>
            <person name="Gambin T."/>
            <person name="Gelowani V."/>
            <person name="Hunter J.V."/>
            <person name="Yesil G."/>
            <person name="Koparir E."/>
            <person name="Yilmaz S."/>
            <person name="Brown M."/>
            <person name="Briskin D."/>
            <person name="Hafner M."/>
            <person name="Morozov P."/>
            <person name="Farazi T.A."/>
            <person name="Bernreuther C."/>
            <person name="Glatzel M."/>
            <person name="Trattnig S."/>
            <person name="Friske J."/>
            <person name="Kronnerwetter C."/>
            <person name="Bainbridge M.N."/>
            <person name="Gezdirici A."/>
            <person name="Seven M."/>
            <person name="Muzny D.M."/>
            <person name="Boerwinkle E."/>
            <person name="Ozen M."/>
            <person name="Clausen T."/>
            <person name="Tuschl T."/>
            <person name="Yuksel A."/>
            <person name="Hess A."/>
            <person name="Gibbs R.A."/>
            <person name="Martinez J."/>
            <person name="Penninger J.M."/>
            <person name="Lupski J.R."/>
        </authorList>
    </citation>
    <scope>FUNCTION</scope>
    <scope>MUTAGENESIS OF LYS-127</scope>
</reference>
<comment type="function">
    <text evidence="2 3">Polynucleotide kinase that can phosphorylate the 5'-hydroxyl groups of double-stranded RNA (dsRNA), single-stranded RNA (ssRNA), double-stranded DNA (dsDNA) and double-stranded DNA:RNA hybrids. dsRNA is phosphorylated more efficiently than dsDNA, and the RNA component of a DNA:RNA hybrid is phosphorylated more efficiently than the DNA component. Plays a key role in both tRNA splicing and mRNA 3'-end formation. Component of the tRNA splicing endonuclease complex: phosphorylates the 5'-terminus of the tRNA 3'-exon during tRNA splicing; this phosphorylation event is a prerequisite for the subsequent ligation of the two exon halves and the production of a mature tRNA (PubMed:23474986, PubMed:24766809). Its role in tRNA splicing and maturation is required for cerebellar development (PubMed:24766809). Component of the pre-mRNA cleavage complex II (CF-II), which seems to be required for mRNA 3'-end formation. Also phosphorylates the 5'-terminus of exogenously introduced short interfering RNAs (siRNAs), which is a necessary prerequisite for their incorporation into the RNA-induced silencing complex (RISC). However, endogenous siRNAs and microRNAs (miRNAs) that are produced by the cleavage of dsRNA precursors by DICER1 already contain a 5'-phosphate group, so this protein may be dispensible for normal RNA-mediated gene silencing.</text>
</comment>
<comment type="catalytic activity">
    <reaction evidence="1">
        <text>a 5'-end dephospho-2'-deoxyribonucleoside-DNA + ATP = a 5'-end 5'-phospho-2'-deoxyribonucleoside-DNA + ADP + H(+)</text>
        <dbReference type="Rhea" id="RHEA:15669"/>
        <dbReference type="Rhea" id="RHEA-COMP:13180"/>
        <dbReference type="Rhea" id="RHEA-COMP:13184"/>
        <dbReference type="ChEBI" id="CHEBI:15378"/>
        <dbReference type="ChEBI" id="CHEBI:30616"/>
        <dbReference type="ChEBI" id="CHEBI:136412"/>
        <dbReference type="ChEBI" id="CHEBI:136416"/>
        <dbReference type="ChEBI" id="CHEBI:456216"/>
        <dbReference type="EC" id="2.7.1.78"/>
    </reaction>
</comment>
<comment type="catalytic activity">
    <reaction evidence="1">
        <text>a 5'-end dephospho-ribonucleoside-RNA + ATP = a 5'-end 5'-phospho-ribonucleoside-RNA + ADP + H(+)</text>
        <dbReference type="Rhea" id="RHEA:54580"/>
        <dbReference type="Rhea" id="RHEA-COMP:13936"/>
        <dbReference type="Rhea" id="RHEA-COMP:15179"/>
        <dbReference type="ChEBI" id="CHEBI:15378"/>
        <dbReference type="ChEBI" id="CHEBI:30616"/>
        <dbReference type="ChEBI" id="CHEBI:138282"/>
        <dbReference type="ChEBI" id="CHEBI:138284"/>
        <dbReference type="ChEBI" id="CHEBI:456216"/>
        <dbReference type="EC" id="2.7.1.78"/>
    </reaction>
</comment>
<comment type="cofactor">
    <cofactor evidence="1">
        <name>Mg(2+)</name>
        <dbReference type="ChEBI" id="CHEBI:18420"/>
    </cofactor>
    <cofactor evidence="1">
        <name>Mn(2+)</name>
        <dbReference type="ChEBI" id="CHEBI:29035"/>
    </cofactor>
    <cofactor evidence="1">
        <name>Ni(2+)</name>
        <dbReference type="ChEBI" id="CHEBI:49786"/>
    </cofactor>
</comment>
<comment type="subunit">
    <text evidence="1">Component of the tRNA splicing endonuclease complex, composed of CLP1, TSEN2, TSEN15, TSEN34 and TSEN54. Component of pre-mRNA cleavage complex II (CF-II). Also associates with numerous components of the pre-mRNA cleavage complex I (CF-I/CFIm), including NUDT21, CPSF2, CPSF3, CPSF6 and CPSF7. Interacts with CSTF2 and SYMPK.</text>
</comment>
<comment type="subcellular location">
    <subcellularLocation>
        <location evidence="1">Nucleus</location>
    </subcellularLocation>
</comment>
<comment type="disruption phenotype">
    <text evidence="2">Early embryonic lethality.</text>
</comment>
<comment type="similarity">
    <text evidence="1">Belongs to the Clp1 family. Clp1 subfamily.</text>
</comment>
<organism>
    <name type="scientific">Mus musculus</name>
    <name type="common">Mouse</name>
    <dbReference type="NCBI Taxonomy" id="10090"/>
    <lineage>
        <taxon>Eukaryota</taxon>
        <taxon>Metazoa</taxon>
        <taxon>Chordata</taxon>
        <taxon>Craniata</taxon>
        <taxon>Vertebrata</taxon>
        <taxon>Euteleostomi</taxon>
        <taxon>Mammalia</taxon>
        <taxon>Eutheria</taxon>
        <taxon>Euarchontoglires</taxon>
        <taxon>Glires</taxon>
        <taxon>Rodentia</taxon>
        <taxon>Myomorpha</taxon>
        <taxon>Muroidea</taxon>
        <taxon>Muridae</taxon>
        <taxon>Murinae</taxon>
        <taxon>Mus</taxon>
        <taxon>Mus</taxon>
    </lineage>
</organism>
<proteinExistence type="evidence at protein level"/>